<sequence length="121" mass="14254">MVYNCGTRLERRKKRVRLKLKRNSSLLRLSIFKSNRHFYVQLIDDKCGRTFASASTLEREVVALTNRRVNSDSVKIVAKLMSDRLNKLDNCKKFIFDRGLYKYTGIVSEFANELRSYGFEF</sequence>
<reference key="1">
    <citation type="journal article" date="2006" name="PLoS Genet.">
        <title>Comparative genomics of emerging human ehrlichiosis agents.</title>
        <authorList>
            <person name="Dunning Hotopp J.C."/>
            <person name="Lin M."/>
            <person name="Madupu R."/>
            <person name="Crabtree J."/>
            <person name="Angiuoli S.V."/>
            <person name="Eisen J.A."/>
            <person name="Seshadri R."/>
            <person name="Ren Q."/>
            <person name="Wu M."/>
            <person name="Utterback T.R."/>
            <person name="Smith S."/>
            <person name="Lewis M."/>
            <person name="Khouri H."/>
            <person name="Zhang C."/>
            <person name="Niu H."/>
            <person name="Lin Q."/>
            <person name="Ohashi N."/>
            <person name="Zhi N."/>
            <person name="Nelson W.C."/>
            <person name="Brinkac L.M."/>
            <person name="Dodson R.J."/>
            <person name="Rosovitz M.J."/>
            <person name="Sundaram J.P."/>
            <person name="Daugherty S.C."/>
            <person name="Davidsen T."/>
            <person name="Durkin A.S."/>
            <person name="Gwinn M.L."/>
            <person name="Haft D.H."/>
            <person name="Selengut J.D."/>
            <person name="Sullivan S.A."/>
            <person name="Zafar N."/>
            <person name="Zhou L."/>
            <person name="Benahmed F."/>
            <person name="Forberger H."/>
            <person name="Halpin R."/>
            <person name="Mulligan S."/>
            <person name="Robinson J."/>
            <person name="White O."/>
            <person name="Rikihisa Y."/>
            <person name="Tettelin H."/>
        </authorList>
    </citation>
    <scope>NUCLEOTIDE SEQUENCE [LARGE SCALE GENOMIC DNA]</scope>
    <source>
        <strain>ATCC CRL-10679 / Arkansas</strain>
    </source>
</reference>
<dbReference type="EMBL" id="CP000236">
    <property type="protein sequence ID" value="ABD44549.1"/>
    <property type="molecule type" value="Genomic_DNA"/>
</dbReference>
<dbReference type="RefSeq" id="WP_011452592.1">
    <property type="nucleotide sequence ID" value="NC_007799.1"/>
</dbReference>
<dbReference type="SMR" id="Q2GH40"/>
<dbReference type="STRING" id="205920.ECH_0425"/>
<dbReference type="KEGG" id="ech:ECH_0425"/>
<dbReference type="eggNOG" id="COG0256">
    <property type="taxonomic scope" value="Bacteria"/>
</dbReference>
<dbReference type="HOGENOM" id="CLU_098841_0_1_5"/>
<dbReference type="OrthoDB" id="9810939at2"/>
<dbReference type="Proteomes" id="UP000008320">
    <property type="component" value="Chromosome"/>
</dbReference>
<dbReference type="GO" id="GO:0022625">
    <property type="term" value="C:cytosolic large ribosomal subunit"/>
    <property type="evidence" value="ECO:0007669"/>
    <property type="project" value="TreeGrafter"/>
</dbReference>
<dbReference type="GO" id="GO:0008097">
    <property type="term" value="F:5S rRNA binding"/>
    <property type="evidence" value="ECO:0007669"/>
    <property type="project" value="TreeGrafter"/>
</dbReference>
<dbReference type="GO" id="GO:0003735">
    <property type="term" value="F:structural constituent of ribosome"/>
    <property type="evidence" value="ECO:0007669"/>
    <property type="project" value="InterPro"/>
</dbReference>
<dbReference type="GO" id="GO:0006412">
    <property type="term" value="P:translation"/>
    <property type="evidence" value="ECO:0007669"/>
    <property type="project" value="UniProtKB-UniRule"/>
</dbReference>
<dbReference type="CDD" id="cd00432">
    <property type="entry name" value="Ribosomal_L18_L5e"/>
    <property type="match status" value="1"/>
</dbReference>
<dbReference type="Gene3D" id="3.30.420.100">
    <property type="match status" value="1"/>
</dbReference>
<dbReference type="HAMAP" id="MF_01337_B">
    <property type="entry name" value="Ribosomal_uL18_B"/>
    <property type="match status" value="1"/>
</dbReference>
<dbReference type="InterPro" id="IPR004389">
    <property type="entry name" value="Ribosomal_uL18_bac-type"/>
</dbReference>
<dbReference type="InterPro" id="IPR005484">
    <property type="entry name" value="Ribosomal_uL18_bac/euk"/>
</dbReference>
<dbReference type="PANTHER" id="PTHR12899">
    <property type="entry name" value="39S RIBOSOMAL PROTEIN L18, MITOCHONDRIAL"/>
    <property type="match status" value="1"/>
</dbReference>
<dbReference type="PANTHER" id="PTHR12899:SF3">
    <property type="entry name" value="LARGE RIBOSOMAL SUBUNIT PROTEIN UL18M"/>
    <property type="match status" value="1"/>
</dbReference>
<dbReference type="Pfam" id="PF00861">
    <property type="entry name" value="Ribosomal_L18p"/>
    <property type="match status" value="1"/>
</dbReference>
<dbReference type="SUPFAM" id="SSF53137">
    <property type="entry name" value="Translational machinery components"/>
    <property type="match status" value="1"/>
</dbReference>
<comment type="function">
    <text evidence="1">This is one of the proteins that bind and probably mediate the attachment of the 5S RNA into the large ribosomal subunit, where it forms part of the central protuberance.</text>
</comment>
<comment type="subunit">
    <text evidence="1">Part of the 50S ribosomal subunit; part of the 5S rRNA/L5/L18/L25 subcomplex. Contacts the 5S and 23S rRNAs.</text>
</comment>
<comment type="similarity">
    <text evidence="1">Belongs to the universal ribosomal protein uL18 family.</text>
</comment>
<proteinExistence type="inferred from homology"/>
<gene>
    <name evidence="1" type="primary">rplR</name>
    <name type="ordered locus">ECH_0425</name>
</gene>
<organism>
    <name type="scientific">Ehrlichia chaffeensis (strain ATCC CRL-10679 / Arkansas)</name>
    <dbReference type="NCBI Taxonomy" id="205920"/>
    <lineage>
        <taxon>Bacteria</taxon>
        <taxon>Pseudomonadati</taxon>
        <taxon>Pseudomonadota</taxon>
        <taxon>Alphaproteobacteria</taxon>
        <taxon>Rickettsiales</taxon>
        <taxon>Anaplasmataceae</taxon>
        <taxon>Ehrlichia</taxon>
    </lineage>
</organism>
<protein>
    <recommendedName>
        <fullName evidence="1">Large ribosomal subunit protein uL18</fullName>
    </recommendedName>
    <alternativeName>
        <fullName evidence="2">50S ribosomal protein L18</fullName>
    </alternativeName>
</protein>
<accession>Q2GH40</accession>
<keyword id="KW-1185">Reference proteome</keyword>
<keyword id="KW-0687">Ribonucleoprotein</keyword>
<keyword id="KW-0689">Ribosomal protein</keyword>
<keyword id="KW-0694">RNA-binding</keyword>
<keyword id="KW-0699">rRNA-binding</keyword>
<evidence type="ECO:0000255" key="1">
    <source>
        <dbReference type="HAMAP-Rule" id="MF_01337"/>
    </source>
</evidence>
<evidence type="ECO:0000305" key="2"/>
<name>RL18_EHRCR</name>
<feature type="chain" id="PRO_0000251311" description="Large ribosomal subunit protein uL18">
    <location>
        <begin position="1"/>
        <end position="121"/>
    </location>
</feature>